<dbReference type="EMBL" id="CP001164">
    <property type="protein sequence ID" value="ACI34830.1"/>
    <property type="molecule type" value="Genomic_DNA"/>
</dbReference>
<dbReference type="RefSeq" id="WP_001293351.1">
    <property type="nucleotide sequence ID" value="NC_011353.1"/>
</dbReference>
<dbReference type="SMR" id="B5YZ71"/>
<dbReference type="KEGG" id="ecf:ECH74115_5388"/>
<dbReference type="HOGENOM" id="CLU_033123_0_0_6"/>
<dbReference type="GO" id="GO:0009376">
    <property type="term" value="C:HslUV protease complex"/>
    <property type="evidence" value="ECO:0007669"/>
    <property type="project" value="UniProtKB-UniRule"/>
</dbReference>
<dbReference type="GO" id="GO:0005524">
    <property type="term" value="F:ATP binding"/>
    <property type="evidence" value="ECO:0007669"/>
    <property type="project" value="UniProtKB-UniRule"/>
</dbReference>
<dbReference type="GO" id="GO:0016887">
    <property type="term" value="F:ATP hydrolysis activity"/>
    <property type="evidence" value="ECO:0007669"/>
    <property type="project" value="InterPro"/>
</dbReference>
<dbReference type="GO" id="GO:0008233">
    <property type="term" value="F:peptidase activity"/>
    <property type="evidence" value="ECO:0007669"/>
    <property type="project" value="InterPro"/>
</dbReference>
<dbReference type="GO" id="GO:0036402">
    <property type="term" value="F:proteasome-activating activity"/>
    <property type="evidence" value="ECO:0007669"/>
    <property type="project" value="UniProtKB-UniRule"/>
</dbReference>
<dbReference type="GO" id="GO:0043335">
    <property type="term" value="P:protein unfolding"/>
    <property type="evidence" value="ECO:0007669"/>
    <property type="project" value="UniProtKB-UniRule"/>
</dbReference>
<dbReference type="GO" id="GO:0051603">
    <property type="term" value="P:proteolysis involved in protein catabolic process"/>
    <property type="evidence" value="ECO:0007669"/>
    <property type="project" value="TreeGrafter"/>
</dbReference>
<dbReference type="CDD" id="cd19498">
    <property type="entry name" value="RecA-like_HslU"/>
    <property type="match status" value="1"/>
</dbReference>
<dbReference type="FunFam" id="1.10.8.10:FF:000012">
    <property type="entry name" value="ATP-dependent protease ATPase subunit HslU"/>
    <property type="match status" value="1"/>
</dbReference>
<dbReference type="FunFam" id="1.10.8.10:FF:000028">
    <property type="entry name" value="ATP-dependent protease ATPase subunit HslU"/>
    <property type="match status" value="1"/>
</dbReference>
<dbReference type="FunFam" id="1.10.8.60:FF:000027">
    <property type="entry name" value="ATP-dependent protease ATPase subunit HslU"/>
    <property type="match status" value="1"/>
</dbReference>
<dbReference type="FunFam" id="3.40.50.300:FF:000213">
    <property type="entry name" value="ATP-dependent protease ATPase subunit HslU"/>
    <property type="match status" value="1"/>
</dbReference>
<dbReference type="FunFam" id="3.40.50.300:FF:000220">
    <property type="entry name" value="ATP-dependent protease ATPase subunit HslU"/>
    <property type="match status" value="1"/>
</dbReference>
<dbReference type="Gene3D" id="1.10.8.60">
    <property type="match status" value="1"/>
</dbReference>
<dbReference type="Gene3D" id="1.10.8.10">
    <property type="entry name" value="DNA helicase RuvA subunit, C-terminal domain"/>
    <property type="match status" value="2"/>
</dbReference>
<dbReference type="Gene3D" id="3.40.50.300">
    <property type="entry name" value="P-loop containing nucleotide triphosphate hydrolases"/>
    <property type="match status" value="1"/>
</dbReference>
<dbReference type="HAMAP" id="MF_00249">
    <property type="entry name" value="HslU"/>
    <property type="match status" value="1"/>
</dbReference>
<dbReference type="InterPro" id="IPR003593">
    <property type="entry name" value="AAA+_ATPase"/>
</dbReference>
<dbReference type="InterPro" id="IPR050052">
    <property type="entry name" value="ATP-dep_Clp_protease_ClpX"/>
</dbReference>
<dbReference type="InterPro" id="IPR003959">
    <property type="entry name" value="ATPase_AAA_core"/>
</dbReference>
<dbReference type="InterPro" id="IPR019489">
    <property type="entry name" value="Clp_ATPase_C"/>
</dbReference>
<dbReference type="InterPro" id="IPR004491">
    <property type="entry name" value="HslU"/>
</dbReference>
<dbReference type="InterPro" id="IPR027417">
    <property type="entry name" value="P-loop_NTPase"/>
</dbReference>
<dbReference type="NCBIfam" id="TIGR00390">
    <property type="entry name" value="hslU"/>
    <property type="match status" value="1"/>
</dbReference>
<dbReference type="NCBIfam" id="NF003544">
    <property type="entry name" value="PRK05201.1"/>
    <property type="match status" value="1"/>
</dbReference>
<dbReference type="PANTHER" id="PTHR48102">
    <property type="entry name" value="ATP-DEPENDENT CLP PROTEASE ATP-BINDING SUBUNIT CLPX-LIKE, MITOCHONDRIAL-RELATED"/>
    <property type="match status" value="1"/>
</dbReference>
<dbReference type="PANTHER" id="PTHR48102:SF3">
    <property type="entry name" value="ATP-DEPENDENT PROTEASE ATPASE SUBUNIT HSLU"/>
    <property type="match status" value="1"/>
</dbReference>
<dbReference type="Pfam" id="PF00004">
    <property type="entry name" value="AAA"/>
    <property type="match status" value="1"/>
</dbReference>
<dbReference type="Pfam" id="PF07724">
    <property type="entry name" value="AAA_2"/>
    <property type="match status" value="1"/>
</dbReference>
<dbReference type="SMART" id="SM00382">
    <property type="entry name" value="AAA"/>
    <property type="match status" value="1"/>
</dbReference>
<dbReference type="SMART" id="SM01086">
    <property type="entry name" value="ClpB_D2-small"/>
    <property type="match status" value="1"/>
</dbReference>
<dbReference type="SUPFAM" id="SSF52540">
    <property type="entry name" value="P-loop containing nucleoside triphosphate hydrolases"/>
    <property type="match status" value="1"/>
</dbReference>
<proteinExistence type="inferred from homology"/>
<comment type="function">
    <text evidence="1">ATPase subunit of a proteasome-like degradation complex; this subunit has chaperone activity. The binding of ATP and its subsequent hydrolysis by HslU are essential for unfolding of protein substrates subsequently hydrolyzed by HslV. HslU recognizes the N-terminal part of its protein substrates and unfolds these before they are guided to HslV for hydrolysis.</text>
</comment>
<comment type="subunit">
    <text evidence="1">A double ring-shaped homohexamer of HslV is capped on each side by a ring-shaped HslU homohexamer. The assembly of the HslU/HslV complex is dependent on binding of ATP.</text>
</comment>
<comment type="subcellular location">
    <subcellularLocation>
        <location evidence="1">Cytoplasm</location>
    </subcellularLocation>
</comment>
<comment type="induction">
    <text evidence="1">By heat shock.</text>
</comment>
<comment type="similarity">
    <text evidence="1">Belongs to the ClpX chaperone family. HslU subfamily.</text>
</comment>
<sequence length="443" mass="49593">MSEMTPREIVSELDKHIIGQNNAKRSVAIALRNRWRRMQLNEELRHEVTPKNILMIGPTGVGKTEIARRLAKLANAPFIKVEATKFTEVGYVGKEVDSIIRDLTDAAVKMVRVQAIEKNRYRAEELAEERILDVLIPPAKNNWGQTEQQQEPSAARQAFRKKLREGQLDDKEIEIDLAAAPMGVEIMAPPGMEEMTSQLQSMFQNLGGQKQKARKLKIKDAMKLLIEEEAAKLVNPEELKQDAIDAVEQHGIVFIDEIDKICKRGESSGPDVSREGVQRDLLPLVEGCTVSTKHGMVKTDHILFIASGAFQIAKPSDLIPELQGRLPIRVELQALTTSDFERILTEPNASITVQYKALMATEGVNIEFTDSGIKRIAEAAWQVNESTENIGARRLHTVLERLMEEISYDASDLSGQNITIDADYVSKHLDALVADEDLSRFIL</sequence>
<name>HSLU_ECO5E</name>
<keyword id="KW-0067">ATP-binding</keyword>
<keyword id="KW-0143">Chaperone</keyword>
<keyword id="KW-0963">Cytoplasm</keyword>
<keyword id="KW-0547">Nucleotide-binding</keyword>
<keyword id="KW-0346">Stress response</keyword>
<accession>B5YZ71</accession>
<evidence type="ECO:0000255" key="1">
    <source>
        <dbReference type="HAMAP-Rule" id="MF_00249"/>
    </source>
</evidence>
<reference key="1">
    <citation type="journal article" date="2011" name="Proc. Natl. Acad. Sci. U.S.A.">
        <title>Genomic anatomy of Escherichia coli O157:H7 outbreaks.</title>
        <authorList>
            <person name="Eppinger M."/>
            <person name="Mammel M.K."/>
            <person name="Leclerc J.E."/>
            <person name="Ravel J."/>
            <person name="Cebula T.A."/>
        </authorList>
    </citation>
    <scope>NUCLEOTIDE SEQUENCE [LARGE SCALE GENOMIC DNA]</scope>
    <source>
        <strain>EC4115 / EHEC</strain>
    </source>
</reference>
<gene>
    <name evidence="1" type="primary">hslU</name>
    <name type="ordered locus">ECH74115_5388</name>
</gene>
<protein>
    <recommendedName>
        <fullName evidence="1">ATP-dependent protease ATPase subunit HslU</fullName>
    </recommendedName>
    <alternativeName>
        <fullName evidence="1">Heat shock protein HslU</fullName>
    </alternativeName>
    <alternativeName>
        <fullName evidence="1">Unfoldase HslU</fullName>
    </alternativeName>
</protein>
<organism>
    <name type="scientific">Escherichia coli O157:H7 (strain EC4115 / EHEC)</name>
    <dbReference type="NCBI Taxonomy" id="444450"/>
    <lineage>
        <taxon>Bacteria</taxon>
        <taxon>Pseudomonadati</taxon>
        <taxon>Pseudomonadota</taxon>
        <taxon>Gammaproteobacteria</taxon>
        <taxon>Enterobacterales</taxon>
        <taxon>Enterobacteriaceae</taxon>
        <taxon>Escherichia</taxon>
    </lineage>
</organism>
<feature type="chain" id="PRO_1000100945" description="ATP-dependent protease ATPase subunit HslU">
    <location>
        <begin position="1"/>
        <end position="443"/>
    </location>
</feature>
<feature type="binding site" evidence="1">
    <location>
        <position position="18"/>
    </location>
    <ligand>
        <name>ATP</name>
        <dbReference type="ChEBI" id="CHEBI:30616"/>
    </ligand>
</feature>
<feature type="binding site" evidence="1">
    <location>
        <begin position="60"/>
        <end position="65"/>
    </location>
    <ligand>
        <name>ATP</name>
        <dbReference type="ChEBI" id="CHEBI:30616"/>
    </ligand>
</feature>
<feature type="binding site" evidence="1">
    <location>
        <position position="256"/>
    </location>
    <ligand>
        <name>ATP</name>
        <dbReference type="ChEBI" id="CHEBI:30616"/>
    </ligand>
</feature>
<feature type="binding site" evidence="1">
    <location>
        <position position="321"/>
    </location>
    <ligand>
        <name>ATP</name>
        <dbReference type="ChEBI" id="CHEBI:30616"/>
    </ligand>
</feature>
<feature type="binding site" evidence="1">
    <location>
        <position position="393"/>
    </location>
    <ligand>
        <name>ATP</name>
        <dbReference type="ChEBI" id="CHEBI:30616"/>
    </ligand>
</feature>